<organism>
    <name type="scientific">Staphylococcus aureus (strain USA300)</name>
    <dbReference type="NCBI Taxonomy" id="367830"/>
    <lineage>
        <taxon>Bacteria</taxon>
        <taxon>Bacillati</taxon>
        <taxon>Bacillota</taxon>
        <taxon>Bacilli</taxon>
        <taxon>Bacillales</taxon>
        <taxon>Staphylococcaceae</taxon>
        <taxon>Staphylococcus</taxon>
    </lineage>
</organism>
<evidence type="ECO:0000255" key="1">
    <source>
        <dbReference type="HAMAP-Rule" id="MF_00551"/>
    </source>
</evidence>
<accession>Q2FGB5</accession>
<name>URK_STAA3</name>
<comment type="catalytic activity">
    <reaction evidence="1">
        <text>uridine + ATP = UMP + ADP + H(+)</text>
        <dbReference type="Rhea" id="RHEA:16825"/>
        <dbReference type="ChEBI" id="CHEBI:15378"/>
        <dbReference type="ChEBI" id="CHEBI:16704"/>
        <dbReference type="ChEBI" id="CHEBI:30616"/>
        <dbReference type="ChEBI" id="CHEBI:57865"/>
        <dbReference type="ChEBI" id="CHEBI:456216"/>
        <dbReference type="EC" id="2.7.1.48"/>
    </reaction>
</comment>
<comment type="catalytic activity">
    <reaction evidence="1">
        <text>cytidine + ATP = CMP + ADP + H(+)</text>
        <dbReference type="Rhea" id="RHEA:24674"/>
        <dbReference type="ChEBI" id="CHEBI:15378"/>
        <dbReference type="ChEBI" id="CHEBI:17562"/>
        <dbReference type="ChEBI" id="CHEBI:30616"/>
        <dbReference type="ChEBI" id="CHEBI:60377"/>
        <dbReference type="ChEBI" id="CHEBI:456216"/>
        <dbReference type="EC" id="2.7.1.48"/>
    </reaction>
</comment>
<comment type="pathway">
    <text evidence="1">Pyrimidine metabolism; CTP biosynthesis via salvage pathway; CTP from cytidine: step 1/3.</text>
</comment>
<comment type="pathway">
    <text evidence="1">Pyrimidine metabolism; UMP biosynthesis via salvage pathway; UMP from uridine: step 1/1.</text>
</comment>
<comment type="subcellular location">
    <subcellularLocation>
        <location evidence="1">Cytoplasm</location>
    </subcellularLocation>
</comment>
<comment type="similarity">
    <text evidence="1">Belongs to the uridine kinase family.</text>
</comment>
<proteinExistence type="inferred from homology"/>
<gene>
    <name evidence="1" type="primary">udk</name>
    <name type="ordered locus">SAUSA300_1568</name>
</gene>
<feature type="chain" id="PRO_1000017902" description="Uridine kinase">
    <location>
        <begin position="1"/>
        <end position="207"/>
    </location>
</feature>
<feature type="binding site" evidence="1">
    <location>
        <begin position="11"/>
        <end position="18"/>
    </location>
    <ligand>
        <name>ATP</name>
        <dbReference type="ChEBI" id="CHEBI:30616"/>
    </ligand>
</feature>
<dbReference type="EC" id="2.7.1.48" evidence="1"/>
<dbReference type="EMBL" id="CP000255">
    <property type="protein sequence ID" value="ABD22828.1"/>
    <property type="molecule type" value="Genomic_DNA"/>
</dbReference>
<dbReference type="RefSeq" id="WP_000648617.1">
    <property type="nucleotide sequence ID" value="NZ_CP027476.1"/>
</dbReference>
<dbReference type="SMR" id="Q2FGB5"/>
<dbReference type="KEGG" id="saa:SAUSA300_1568"/>
<dbReference type="HOGENOM" id="CLU_021278_1_2_9"/>
<dbReference type="OMA" id="TVKPMHE"/>
<dbReference type="UniPathway" id="UPA00574">
    <property type="reaction ID" value="UER00637"/>
</dbReference>
<dbReference type="UniPathway" id="UPA00579">
    <property type="reaction ID" value="UER00640"/>
</dbReference>
<dbReference type="Proteomes" id="UP000001939">
    <property type="component" value="Chromosome"/>
</dbReference>
<dbReference type="GO" id="GO:0005737">
    <property type="term" value="C:cytoplasm"/>
    <property type="evidence" value="ECO:0007669"/>
    <property type="project" value="UniProtKB-SubCell"/>
</dbReference>
<dbReference type="GO" id="GO:0005524">
    <property type="term" value="F:ATP binding"/>
    <property type="evidence" value="ECO:0007669"/>
    <property type="project" value="UniProtKB-UniRule"/>
</dbReference>
<dbReference type="GO" id="GO:0043771">
    <property type="term" value="F:cytidine kinase activity"/>
    <property type="evidence" value="ECO:0007669"/>
    <property type="project" value="RHEA"/>
</dbReference>
<dbReference type="GO" id="GO:0004849">
    <property type="term" value="F:uridine kinase activity"/>
    <property type="evidence" value="ECO:0007669"/>
    <property type="project" value="UniProtKB-UniRule"/>
</dbReference>
<dbReference type="GO" id="GO:0044211">
    <property type="term" value="P:CTP salvage"/>
    <property type="evidence" value="ECO:0007669"/>
    <property type="project" value="UniProtKB-UniRule"/>
</dbReference>
<dbReference type="GO" id="GO:0044206">
    <property type="term" value="P:UMP salvage"/>
    <property type="evidence" value="ECO:0007669"/>
    <property type="project" value="UniProtKB-UniRule"/>
</dbReference>
<dbReference type="CDD" id="cd02023">
    <property type="entry name" value="UMPK"/>
    <property type="match status" value="1"/>
</dbReference>
<dbReference type="Gene3D" id="3.40.50.300">
    <property type="entry name" value="P-loop containing nucleotide triphosphate hydrolases"/>
    <property type="match status" value="1"/>
</dbReference>
<dbReference type="HAMAP" id="MF_00551">
    <property type="entry name" value="Uridine_kinase"/>
    <property type="match status" value="1"/>
</dbReference>
<dbReference type="InterPro" id="IPR027417">
    <property type="entry name" value="P-loop_NTPase"/>
</dbReference>
<dbReference type="InterPro" id="IPR006083">
    <property type="entry name" value="PRK/URK"/>
</dbReference>
<dbReference type="InterPro" id="IPR026008">
    <property type="entry name" value="Uridine_kinase"/>
</dbReference>
<dbReference type="InterPro" id="IPR000764">
    <property type="entry name" value="Uridine_kinase-like"/>
</dbReference>
<dbReference type="NCBIfam" id="NF004018">
    <property type="entry name" value="PRK05480.1"/>
    <property type="match status" value="1"/>
</dbReference>
<dbReference type="NCBIfam" id="TIGR00235">
    <property type="entry name" value="udk"/>
    <property type="match status" value="1"/>
</dbReference>
<dbReference type="PANTHER" id="PTHR10285">
    <property type="entry name" value="URIDINE KINASE"/>
    <property type="match status" value="1"/>
</dbReference>
<dbReference type="Pfam" id="PF00485">
    <property type="entry name" value="PRK"/>
    <property type="match status" value="1"/>
</dbReference>
<dbReference type="PRINTS" id="PR00988">
    <property type="entry name" value="URIDINKINASE"/>
</dbReference>
<dbReference type="SUPFAM" id="SSF52540">
    <property type="entry name" value="P-loop containing nucleoside triphosphate hydrolases"/>
    <property type="match status" value="1"/>
</dbReference>
<protein>
    <recommendedName>
        <fullName evidence="1">Uridine kinase</fullName>
        <ecNumber evidence="1">2.7.1.48</ecNumber>
    </recommendedName>
    <alternativeName>
        <fullName evidence="1">Cytidine monophosphokinase</fullName>
    </alternativeName>
    <alternativeName>
        <fullName evidence="1">Uridine monophosphokinase</fullName>
    </alternativeName>
</protein>
<keyword id="KW-0067">ATP-binding</keyword>
<keyword id="KW-0963">Cytoplasm</keyword>
<keyword id="KW-0418">Kinase</keyword>
<keyword id="KW-0547">Nucleotide-binding</keyword>
<keyword id="KW-0808">Transferase</keyword>
<sequence length="207" mass="23505">MKATTIIGIAGGSGSGKTTVTNEIMKNLEGHSVALLAQDYYYKDQKHLTFDERLETNYDHPFAFDNDLLIENLKDLKNGKAVEVPTYDYASHTRSDITIDFKPKDVIIVEGIFALENKVLRDMMDVKIYVDTDADLRILRRLTRDTKERGRSMDSVINQYLSVVRPMHDQFIEPTKKYADIIIPEGGSNKVAIDIMTTKIQSLVSKQ</sequence>
<reference key="1">
    <citation type="journal article" date="2006" name="Lancet">
        <title>Complete genome sequence of USA300, an epidemic clone of community-acquired meticillin-resistant Staphylococcus aureus.</title>
        <authorList>
            <person name="Diep B.A."/>
            <person name="Gill S.R."/>
            <person name="Chang R.F."/>
            <person name="Phan T.H."/>
            <person name="Chen J.H."/>
            <person name="Davidson M.G."/>
            <person name="Lin F."/>
            <person name="Lin J."/>
            <person name="Carleton H.A."/>
            <person name="Mongodin E.F."/>
            <person name="Sensabaugh G.F."/>
            <person name="Perdreau-Remington F."/>
        </authorList>
    </citation>
    <scope>NUCLEOTIDE SEQUENCE [LARGE SCALE GENOMIC DNA]</scope>
    <source>
        <strain>USA300</strain>
    </source>
</reference>